<comment type="function">
    <text evidence="1">Involved in the biosynthesis of ADP-glucose, a building block required for the elongation reactions to produce glycogen. Catalyzes the reaction between ATP and alpha-D-glucose 1-phosphate (G1P) to produce pyrophosphate and ADP-Glc.</text>
</comment>
<comment type="catalytic activity">
    <reaction evidence="1">
        <text>alpha-D-glucose 1-phosphate + ATP + H(+) = ADP-alpha-D-glucose + diphosphate</text>
        <dbReference type="Rhea" id="RHEA:12120"/>
        <dbReference type="ChEBI" id="CHEBI:15378"/>
        <dbReference type="ChEBI" id="CHEBI:30616"/>
        <dbReference type="ChEBI" id="CHEBI:33019"/>
        <dbReference type="ChEBI" id="CHEBI:57498"/>
        <dbReference type="ChEBI" id="CHEBI:58601"/>
        <dbReference type="EC" id="2.7.7.27"/>
    </reaction>
</comment>
<comment type="pathway">
    <text evidence="1">Glycan biosynthesis; glycogen biosynthesis.</text>
</comment>
<comment type="subunit">
    <text evidence="1">Homotetramer.</text>
</comment>
<comment type="similarity">
    <text evidence="1">Belongs to the bacterial/plant glucose-1-phosphate adenylyltransferase family.</text>
</comment>
<organism>
    <name type="scientific">Shewanella sp. (strain MR-7)</name>
    <dbReference type="NCBI Taxonomy" id="60481"/>
    <lineage>
        <taxon>Bacteria</taxon>
        <taxon>Pseudomonadati</taxon>
        <taxon>Pseudomonadota</taxon>
        <taxon>Gammaproteobacteria</taxon>
        <taxon>Alteromonadales</taxon>
        <taxon>Shewanellaceae</taxon>
        <taxon>Shewanella</taxon>
    </lineage>
</organism>
<keyword id="KW-0067">ATP-binding</keyword>
<keyword id="KW-0119">Carbohydrate metabolism</keyword>
<keyword id="KW-0320">Glycogen biosynthesis</keyword>
<keyword id="KW-0321">Glycogen metabolism</keyword>
<keyword id="KW-0547">Nucleotide-binding</keyword>
<keyword id="KW-0548">Nucleotidyltransferase</keyword>
<keyword id="KW-0808">Transferase</keyword>
<reference key="1">
    <citation type="submission" date="2006-08" db="EMBL/GenBank/DDBJ databases">
        <title>Complete sequence of chromosome 1 of Shewanella sp. MR-7.</title>
        <authorList>
            <person name="Copeland A."/>
            <person name="Lucas S."/>
            <person name="Lapidus A."/>
            <person name="Barry K."/>
            <person name="Detter J.C."/>
            <person name="Glavina del Rio T."/>
            <person name="Hammon N."/>
            <person name="Israni S."/>
            <person name="Dalin E."/>
            <person name="Tice H."/>
            <person name="Pitluck S."/>
            <person name="Kiss H."/>
            <person name="Brettin T."/>
            <person name="Bruce D."/>
            <person name="Han C."/>
            <person name="Tapia R."/>
            <person name="Gilna P."/>
            <person name="Schmutz J."/>
            <person name="Larimer F."/>
            <person name="Land M."/>
            <person name="Hauser L."/>
            <person name="Kyrpides N."/>
            <person name="Mikhailova N."/>
            <person name="Nealson K."/>
            <person name="Konstantinidis K."/>
            <person name="Klappenbach J."/>
            <person name="Tiedje J."/>
            <person name="Richardson P."/>
        </authorList>
    </citation>
    <scope>NUCLEOTIDE SEQUENCE [LARGE SCALE GENOMIC DNA]</scope>
    <source>
        <strain>MR-7</strain>
    </source>
</reference>
<name>GLGC_SHESR</name>
<evidence type="ECO:0000255" key="1">
    <source>
        <dbReference type="HAMAP-Rule" id="MF_00624"/>
    </source>
</evidence>
<gene>
    <name evidence="1" type="primary">glgC</name>
    <name type="ordered locus">Shewmr7_2833</name>
</gene>
<feature type="chain" id="PRO_0000261899" description="Glucose-1-phosphate adenylyltransferase">
    <location>
        <begin position="1"/>
        <end position="420"/>
    </location>
</feature>
<feature type="binding site" evidence="1">
    <location>
        <position position="107"/>
    </location>
    <ligand>
        <name>alpha-D-glucose 1-phosphate</name>
        <dbReference type="ChEBI" id="CHEBI:58601"/>
    </ligand>
</feature>
<feature type="binding site" evidence="1">
    <location>
        <position position="173"/>
    </location>
    <ligand>
        <name>alpha-D-glucose 1-phosphate</name>
        <dbReference type="ChEBI" id="CHEBI:58601"/>
    </ligand>
</feature>
<feature type="binding site" evidence="1">
    <location>
        <begin position="188"/>
        <end position="189"/>
    </location>
    <ligand>
        <name>alpha-D-glucose 1-phosphate</name>
        <dbReference type="ChEBI" id="CHEBI:58601"/>
    </ligand>
</feature>
<feature type="binding site" evidence="1">
    <location>
        <position position="206"/>
    </location>
    <ligand>
        <name>alpha-D-glucose 1-phosphate</name>
        <dbReference type="ChEBI" id="CHEBI:58601"/>
    </ligand>
</feature>
<accession>Q0HST8</accession>
<sequence>MSNVRYISNLTRETYALILAGGRGSRLHELTDWRAKPALYFGGKFRIIDFPLSNCINSGIRRVGVVTQYKSHSLIRHVMRGWGHFKKELGESVEILPASQRYSENWYQGTADAVFQNIDIIRHELPKYVMVLSGDHVYRMDYAGLLAAHAESGADMTVSCLEVPVAEAAGAFGVMEVDDEMRILGFEEKPKHPKHSPGNPEKCLASMGNYVFNTEFLFDQLKKDAQNANSDRDFGKDIIPSIIEKHKVFAYPFKSAFPNEQAYWRDVGTLDSFWQANMELLSPTPALNLYDAKWPIWTYQEQLPPAKFVFDDDDRRGMAVDSIISGGCIISGATVRRSVLFNEVRVCSYSVVEDSVVLPDVVVLRHCKIKNAIIDRGCIIPEGTVIGYNHDHDRAKGFRVSEKGITLVTRDMLGLPVGYE</sequence>
<dbReference type="EC" id="2.7.7.27" evidence="1"/>
<dbReference type="EMBL" id="CP000444">
    <property type="protein sequence ID" value="ABI43817.1"/>
    <property type="molecule type" value="Genomic_DNA"/>
</dbReference>
<dbReference type="SMR" id="Q0HST8"/>
<dbReference type="KEGG" id="shm:Shewmr7_2833"/>
<dbReference type="HOGENOM" id="CLU_029499_14_1_6"/>
<dbReference type="UniPathway" id="UPA00164"/>
<dbReference type="GO" id="GO:0005524">
    <property type="term" value="F:ATP binding"/>
    <property type="evidence" value="ECO:0007669"/>
    <property type="project" value="UniProtKB-KW"/>
</dbReference>
<dbReference type="GO" id="GO:0008878">
    <property type="term" value="F:glucose-1-phosphate adenylyltransferase activity"/>
    <property type="evidence" value="ECO:0007669"/>
    <property type="project" value="UniProtKB-UniRule"/>
</dbReference>
<dbReference type="GO" id="GO:0005978">
    <property type="term" value="P:glycogen biosynthetic process"/>
    <property type="evidence" value="ECO:0007669"/>
    <property type="project" value="UniProtKB-UniRule"/>
</dbReference>
<dbReference type="CDD" id="cd02508">
    <property type="entry name" value="ADP_Glucose_PP"/>
    <property type="match status" value="1"/>
</dbReference>
<dbReference type="CDD" id="cd04651">
    <property type="entry name" value="LbH_G1P_AT_C"/>
    <property type="match status" value="1"/>
</dbReference>
<dbReference type="Gene3D" id="2.160.10.10">
    <property type="entry name" value="Hexapeptide repeat proteins"/>
    <property type="match status" value="1"/>
</dbReference>
<dbReference type="Gene3D" id="3.90.550.10">
    <property type="entry name" value="Spore Coat Polysaccharide Biosynthesis Protein SpsA, Chain A"/>
    <property type="match status" value="1"/>
</dbReference>
<dbReference type="HAMAP" id="MF_00624">
    <property type="entry name" value="GlgC"/>
    <property type="match status" value="1"/>
</dbReference>
<dbReference type="InterPro" id="IPR011831">
    <property type="entry name" value="ADP-Glc_PPase"/>
</dbReference>
<dbReference type="InterPro" id="IPR005836">
    <property type="entry name" value="ADP_Glu_pyroP_CS"/>
</dbReference>
<dbReference type="InterPro" id="IPR023049">
    <property type="entry name" value="GlgC_bac"/>
</dbReference>
<dbReference type="InterPro" id="IPR056818">
    <property type="entry name" value="GlmU/GlgC-like_hexapep"/>
</dbReference>
<dbReference type="InterPro" id="IPR005835">
    <property type="entry name" value="NTP_transferase_dom"/>
</dbReference>
<dbReference type="InterPro" id="IPR029044">
    <property type="entry name" value="Nucleotide-diphossugar_trans"/>
</dbReference>
<dbReference type="InterPro" id="IPR011004">
    <property type="entry name" value="Trimer_LpxA-like_sf"/>
</dbReference>
<dbReference type="NCBIfam" id="TIGR02091">
    <property type="entry name" value="glgC"/>
    <property type="match status" value="1"/>
</dbReference>
<dbReference type="NCBIfam" id="NF001947">
    <property type="entry name" value="PRK00725.1"/>
    <property type="match status" value="1"/>
</dbReference>
<dbReference type="NCBIfam" id="NF002023">
    <property type="entry name" value="PRK00844.1"/>
    <property type="match status" value="1"/>
</dbReference>
<dbReference type="PANTHER" id="PTHR43523:SF2">
    <property type="entry name" value="GLUCOSE-1-PHOSPHATE ADENYLYLTRANSFERASE"/>
    <property type="match status" value="1"/>
</dbReference>
<dbReference type="PANTHER" id="PTHR43523">
    <property type="entry name" value="GLUCOSE-1-PHOSPHATE ADENYLYLTRANSFERASE-RELATED"/>
    <property type="match status" value="1"/>
</dbReference>
<dbReference type="Pfam" id="PF24894">
    <property type="entry name" value="Hexapep_GlmU"/>
    <property type="match status" value="1"/>
</dbReference>
<dbReference type="Pfam" id="PF00483">
    <property type="entry name" value="NTP_transferase"/>
    <property type="match status" value="1"/>
</dbReference>
<dbReference type="SUPFAM" id="SSF53448">
    <property type="entry name" value="Nucleotide-diphospho-sugar transferases"/>
    <property type="match status" value="1"/>
</dbReference>
<dbReference type="SUPFAM" id="SSF51161">
    <property type="entry name" value="Trimeric LpxA-like enzymes"/>
    <property type="match status" value="1"/>
</dbReference>
<dbReference type="PROSITE" id="PS00808">
    <property type="entry name" value="ADP_GLC_PYROPHOSPH_1"/>
    <property type="match status" value="1"/>
</dbReference>
<dbReference type="PROSITE" id="PS00809">
    <property type="entry name" value="ADP_GLC_PYROPHOSPH_2"/>
    <property type="match status" value="1"/>
</dbReference>
<dbReference type="PROSITE" id="PS00810">
    <property type="entry name" value="ADP_GLC_PYROPHOSPH_3"/>
    <property type="match status" value="1"/>
</dbReference>
<proteinExistence type="inferred from homology"/>
<protein>
    <recommendedName>
        <fullName evidence="1">Glucose-1-phosphate adenylyltransferase</fullName>
        <ecNumber evidence="1">2.7.7.27</ecNumber>
    </recommendedName>
    <alternativeName>
        <fullName evidence="1">ADP-glucose pyrophosphorylase</fullName>
        <shortName evidence="1">ADPGlc PPase</shortName>
    </alternativeName>
    <alternativeName>
        <fullName evidence="1">ADP-glucose synthase</fullName>
    </alternativeName>
</protein>